<protein>
    <recommendedName>
        <fullName evidence="1">Small ribosomal subunit protein uS14c</fullName>
    </recommendedName>
    <alternativeName>
        <fullName evidence="2">30S ribosomal protein S14, chloroplastic</fullName>
    </alternativeName>
</protein>
<name>RR14_DRANE</name>
<reference key="1">
    <citation type="submission" date="2007-03" db="EMBL/GenBank/DDBJ databases">
        <title>Sequencing analysis of Draba nemoroza chloroplast DNA.</title>
        <authorList>
            <person name="Hosouchi T."/>
            <person name="Tsuruoka H."/>
            <person name="Kotani H."/>
        </authorList>
    </citation>
    <scope>NUCLEOTIDE SEQUENCE [LARGE SCALE GENOMIC DNA]</scope>
</reference>
<evidence type="ECO:0000255" key="1">
    <source>
        <dbReference type="HAMAP-Rule" id="MF_00537"/>
    </source>
</evidence>
<evidence type="ECO:0000305" key="2"/>
<keyword id="KW-0150">Chloroplast</keyword>
<keyword id="KW-0934">Plastid</keyword>
<keyword id="KW-0687">Ribonucleoprotein</keyword>
<keyword id="KW-0689">Ribosomal protein</keyword>
<keyword id="KW-0694">RNA-binding</keyword>
<keyword id="KW-0699">rRNA-binding</keyword>
<dbReference type="EMBL" id="AP009373">
    <property type="protein sequence ID" value="BAF50372.1"/>
    <property type="molecule type" value="Genomic_DNA"/>
</dbReference>
<dbReference type="RefSeq" id="YP_001123548.1">
    <property type="nucleotide sequence ID" value="NC_009272.1"/>
</dbReference>
<dbReference type="SMR" id="A4QL17"/>
<dbReference type="GeneID" id="4964790"/>
<dbReference type="GO" id="GO:0009507">
    <property type="term" value="C:chloroplast"/>
    <property type="evidence" value="ECO:0007669"/>
    <property type="project" value="UniProtKB-SubCell"/>
</dbReference>
<dbReference type="GO" id="GO:0015935">
    <property type="term" value="C:small ribosomal subunit"/>
    <property type="evidence" value="ECO:0007669"/>
    <property type="project" value="TreeGrafter"/>
</dbReference>
<dbReference type="GO" id="GO:0019843">
    <property type="term" value="F:rRNA binding"/>
    <property type="evidence" value="ECO:0007669"/>
    <property type="project" value="UniProtKB-UniRule"/>
</dbReference>
<dbReference type="GO" id="GO:0003735">
    <property type="term" value="F:structural constituent of ribosome"/>
    <property type="evidence" value="ECO:0007669"/>
    <property type="project" value="InterPro"/>
</dbReference>
<dbReference type="GO" id="GO:0006412">
    <property type="term" value="P:translation"/>
    <property type="evidence" value="ECO:0007669"/>
    <property type="project" value="UniProtKB-UniRule"/>
</dbReference>
<dbReference type="FunFam" id="1.10.287.1480:FF:000001">
    <property type="entry name" value="30S ribosomal protein S14"/>
    <property type="match status" value="1"/>
</dbReference>
<dbReference type="Gene3D" id="1.10.287.1480">
    <property type="match status" value="1"/>
</dbReference>
<dbReference type="HAMAP" id="MF_00537">
    <property type="entry name" value="Ribosomal_uS14_1"/>
    <property type="match status" value="1"/>
</dbReference>
<dbReference type="InterPro" id="IPR001209">
    <property type="entry name" value="Ribosomal_uS14"/>
</dbReference>
<dbReference type="InterPro" id="IPR023036">
    <property type="entry name" value="Ribosomal_uS14_bac/plastid"/>
</dbReference>
<dbReference type="InterPro" id="IPR018271">
    <property type="entry name" value="Ribosomal_uS14_CS"/>
</dbReference>
<dbReference type="NCBIfam" id="NF006477">
    <property type="entry name" value="PRK08881.1"/>
    <property type="match status" value="1"/>
</dbReference>
<dbReference type="PANTHER" id="PTHR19836">
    <property type="entry name" value="30S RIBOSOMAL PROTEIN S14"/>
    <property type="match status" value="1"/>
</dbReference>
<dbReference type="PANTHER" id="PTHR19836:SF19">
    <property type="entry name" value="SMALL RIBOSOMAL SUBUNIT PROTEIN US14M"/>
    <property type="match status" value="1"/>
</dbReference>
<dbReference type="Pfam" id="PF00253">
    <property type="entry name" value="Ribosomal_S14"/>
    <property type="match status" value="1"/>
</dbReference>
<dbReference type="SUPFAM" id="SSF57716">
    <property type="entry name" value="Glucocorticoid receptor-like (DNA-binding domain)"/>
    <property type="match status" value="1"/>
</dbReference>
<dbReference type="PROSITE" id="PS00527">
    <property type="entry name" value="RIBOSOMAL_S14"/>
    <property type="match status" value="1"/>
</dbReference>
<geneLocation type="chloroplast"/>
<gene>
    <name evidence="1" type="primary">rps14</name>
</gene>
<organism>
    <name type="scientific">Draba nemorosa</name>
    <name type="common">Woodland whitlowgrass</name>
    <dbReference type="NCBI Taxonomy" id="171822"/>
    <lineage>
        <taxon>Eukaryota</taxon>
        <taxon>Viridiplantae</taxon>
        <taxon>Streptophyta</taxon>
        <taxon>Embryophyta</taxon>
        <taxon>Tracheophyta</taxon>
        <taxon>Spermatophyta</taxon>
        <taxon>Magnoliopsida</taxon>
        <taxon>eudicotyledons</taxon>
        <taxon>Gunneridae</taxon>
        <taxon>Pentapetalae</taxon>
        <taxon>rosids</taxon>
        <taxon>malvids</taxon>
        <taxon>Brassicales</taxon>
        <taxon>Brassicaceae</taxon>
        <taxon>Arabideae</taxon>
        <taxon>Draba</taxon>
    </lineage>
</organism>
<feature type="chain" id="PRO_0000354415" description="Small ribosomal subunit protein uS14c">
    <location>
        <begin position="1"/>
        <end position="100"/>
    </location>
</feature>
<proteinExistence type="inferred from homology"/>
<sequence>MAKKSLIYREKKRQKLEQKYHLIRRSSKKEISLIPSLSEKWKIHGKLQSPPRNSAPTRLHRRCFSTGRPRANYRDFGLSGHILREMVQACLLPGATRSSW</sequence>
<accession>A4QL17</accession>
<comment type="function">
    <text evidence="1">Binds 16S rRNA, required for the assembly of 30S particles.</text>
</comment>
<comment type="subunit">
    <text evidence="1">Part of the 30S ribosomal subunit.</text>
</comment>
<comment type="subcellular location">
    <subcellularLocation>
        <location>Plastid</location>
        <location>Chloroplast</location>
    </subcellularLocation>
</comment>
<comment type="similarity">
    <text evidence="1">Belongs to the universal ribosomal protein uS14 family.</text>
</comment>